<evidence type="ECO:0000255" key="1">
    <source>
        <dbReference type="HAMAP-Rule" id="MF_04007"/>
    </source>
</evidence>
<evidence type="ECO:0000256" key="2">
    <source>
        <dbReference type="SAM" id="MobiDB-lite"/>
    </source>
</evidence>
<organism>
    <name type="scientific">Human herpesvirus 2 (strain HG52)</name>
    <name type="common">HHV-2</name>
    <name type="synonym">Human herpes simplex virus 2</name>
    <dbReference type="NCBI Taxonomy" id="10315"/>
    <lineage>
        <taxon>Viruses</taxon>
        <taxon>Duplodnaviria</taxon>
        <taxon>Heunggongvirae</taxon>
        <taxon>Peploviricota</taxon>
        <taxon>Herviviricetes</taxon>
        <taxon>Herpesvirales</taxon>
        <taxon>Orthoherpesviridae</taxon>
        <taxon>Alphaherpesvirinae</taxon>
        <taxon>Simplexvirus</taxon>
        <taxon>Simplexvirus humanalpha2</taxon>
        <taxon>Human herpesvirus 2</taxon>
    </lineage>
</organism>
<comment type="function">
    <text evidence="1">Plays several crucial roles in viral infection. Participates in the opening of the viral DNA origin to initiate replication by interacting with the origin-binding protein. May disrupt loops, hairpins and other secondary structures present on ssDNA to reduce and eliminate pausing of viral DNA polymerase at specific sites during elongation. Promotes viral DNA recombination by performing strand-transfer, characterized by the ability to transfer a DNA strand from a linear duplex to a complementary single-stranded DNA circle. Can also catalyze the renaturation of complementary single strands. Additionally, reorganizes the host cell nucleus, leading to the formation of prereplicative sites and replication compartments. This process is driven by the protein which can form double-helical filaments in the absence of DNA.</text>
</comment>
<comment type="subunit">
    <text evidence="1">Homooligomers. Forms double-helical filaments necessary for the formation of replication compartments within the host nucleus. Interacts with the origin-binding protein. Interacts with the helicase primase complex; this interaction stimulates primer synthesis activity of the helicase-primase complex. Interacts with the DNA polymerase. Interacts with the alkaline exonuclease; this interaction increases its nuclease processivity.</text>
</comment>
<comment type="subcellular location">
    <subcellularLocation>
        <location evidence="1">Host nucleus</location>
    </subcellularLocation>
    <text evidence="1">In the absence of DNA replication, found in the nuclear framework-associated structures (prereplicative sites). As viral DNA replication proceeds, it migrates to globular intranuclear structures (replication compartments).</text>
</comment>
<comment type="similarity">
    <text evidence="1">Belongs to the herpesviridae major DNA-binding protein family.</text>
</comment>
<gene>
    <name evidence="1" type="primary">DBP</name>
    <name type="synonym">ICP8</name>
    <name type="ORF">UL29</name>
</gene>
<keyword id="KW-0235">DNA replication</keyword>
<keyword id="KW-0238">DNA-binding</keyword>
<keyword id="KW-1048">Host nucleus</keyword>
<keyword id="KW-0479">Metal-binding</keyword>
<keyword id="KW-1185">Reference proteome</keyword>
<keyword id="KW-0862">Zinc</keyword>
<keyword id="KW-0863">Zinc-finger</keyword>
<accession>P89452</accession>
<name>DNBI_HHV2H</name>
<reference key="1">
    <citation type="journal article" date="1998" name="J. Virol.">
        <title>The genome sequence of herpes simplex virus type 2.</title>
        <authorList>
            <person name="Dolan A."/>
            <person name="Jamieson F.E."/>
            <person name="Cunningham C."/>
            <person name="Barnett B.C."/>
            <person name="McGeoch D.J."/>
        </authorList>
    </citation>
    <scope>NUCLEOTIDE SEQUENCE [LARGE SCALE GENOMIC DNA]</scope>
</reference>
<dbReference type="EMBL" id="Z86099">
    <property type="protein sequence ID" value="CAB06754.1"/>
    <property type="molecule type" value="Genomic_DNA"/>
</dbReference>
<dbReference type="SMR" id="P89452"/>
<dbReference type="Proteomes" id="UP000001874">
    <property type="component" value="Segment"/>
</dbReference>
<dbReference type="GO" id="GO:0042025">
    <property type="term" value="C:host cell nucleus"/>
    <property type="evidence" value="ECO:0007669"/>
    <property type="project" value="UniProtKB-SubCell"/>
</dbReference>
<dbReference type="GO" id="GO:0003697">
    <property type="term" value="F:single-stranded DNA binding"/>
    <property type="evidence" value="ECO:0007669"/>
    <property type="project" value="InterPro"/>
</dbReference>
<dbReference type="GO" id="GO:0008270">
    <property type="term" value="F:zinc ion binding"/>
    <property type="evidence" value="ECO:0007669"/>
    <property type="project" value="UniProtKB-KW"/>
</dbReference>
<dbReference type="GO" id="GO:0006260">
    <property type="term" value="P:DNA replication"/>
    <property type="evidence" value="ECO:0007669"/>
    <property type="project" value="UniProtKB-KW"/>
</dbReference>
<dbReference type="FunFam" id="1.20.190.40:FF:000001">
    <property type="entry name" value="Major DNA-binding protein"/>
    <property type="match status" value="1"/>
</dbReference>
<dbReference type="FunFam" id="1.20.190.40:FF:000002">
    <property type="entry name" value="Major DNA-binding protein"/>
    <property type="match status" value="1"/>
</dbReference>
<dbReference type="Gene3D" id="1.10.150.560">
    <property type="match status" value="1"/>
</dbReference>
<dbReference type="Gene3D" id="1.20.190.40">
    <property type="entry name" value="Viral ssDNA binding protein, head domain"/>
    <property type="match status" value="2"/>
</dbReference>
<dbReference type="HAMAP" id="MF_04007">
    <property type="entry name" value="HSV_DNBI"/>
    <property type="match status" value="1"/>
</dbReference>
<dbReference type="InterPro" id="IPR035989">
    <property type="entry name" value="DBP_sf"/>
</dbReference>
<dbReference type="InterPro" id="IPR043031">
    <property type="entry name" value="Viral_ssDBP_head"/>
</dbReference>
<dbReference type="InterPro" id="IPR000635">
    <property type="entry name" value="Viral_ssDNA-bd"/>
</dbReference>
<dbReference type="Pfam" id="PF00747">
    <property type="entry name" value="Viral_DNA_bp"/>
    <property type="match status" value="1"/>
</dbReference>
<dbReference type="SUPFAM" id="SSF118208">
    <property type="entry name" value="Viral ssDNA binding protein"/>
    <property type="match status" value="1"/>
</dbReference>
<organismHost>
    <name type="scientific">Homo sapiens</name>
    <name type="common">Human</name>
    <dbReference type="NCBI Taxonomy" id="9606"/>
</organismHost>
<protein>
    <recommendedName>
        <fullName evidence="1">Major DNA-binding protein</fullName>
    </recommendedName>
</protein>
<proteinExistence type="inferred from homology"/>
<feature type="chain" id="PRO_0000115747" description="Major DNA-binding protein">
    <location>
        <begin position="1"/>
        <end position="1196"/>
    </location>
</feature>
<feature type="zinc finger region" evidence="1">
    <location>
        <begin position="499"/>
        <end position="512"/>
    </location>
</feature>
<feature type="region of interest" description="Required for nuclear localization" evidence="1">
    <location>
        <begin position="1171"/>
        <end position="1196"/>
    </location>
</feature>
<feature type="region of interest" description="Disordered" evidence="2">
    <location>
        <begin position="1176"/>
        <end position="1196"/>
    </location>
</feature>
<feature type="short sequence motif" description="Required for filament formation" evidence="1">
    <location>
        <begin position="843"/>
        <end position="844"/>
    </location>
</feature>
<feature type="short sequence motif" description="Required for filament formation" evidence="1">
    <location>
        <begin position="1142"/>
        <end position="1144"/>
    </location>
</feature>
<sequence>MDTKPKTTTTVKVPPGPMGYVYGRACPAEGLELLSLLSARSGDADVAVAPLIVGLTVESGFEANVAAVVGSRTTGLGGTAVSLKLMPSHYSPSVYVFHGGRHLAPSTQAPNLTRLCERARPHFGFADYAPRPCDLKHETTGDALCERLGLDPDRALLYLVITEGFREAVCISNTFLHLGGMDKVTIGDAEVHRIPVYPLQMFMPDFSRVIADPFNCNHRSIGENFNYPLPFFNRPLARLLFEAVVGPAAVALRARNVDAVARAAAHLAFDENHEGAALPADITFTAFEASQGKPQRGARDAGNKGPAGGFEQRLASVMAGDAALALESIVSMAVFDEPPPDITTWPLLEGQETPAARAGAVGAYLARAAGLVGAMVFSTNSALHLTEVDDAGPADPKDHSKPSFYRFFLVPGTHVAANPQLDREGHVVPGYEGRPTAPLVGGTQEFAGEHLAMLCGFSPALLAKMLFYLERCDGGVIVGRQEMDVFRYVADSGQTDVPCNLCTFETRHACAHTTLMRLRARHPKFASAARGAIGVFGTMNSAYSDCDVLGNYAAFSALKRADGSENTRTIMQETYRAATERVMAELEALQYVDQAVPTALGRLETIIGNREALHTVVNNIKQLVDREVEQLMRNLIEGRNFKFRDGLAEANHAMSLSLDPYTCGPCPLLQLLARRSNLAVYQDLALSQCHGVFAGQSVEGRNFRNQFQPVLRRRVMDLFNNGFLSAKTLTVALSEGAAICAPSLTAGQTAPAESSFEGDVARVTLGFPKELRVKSRVLFAGASANASEAAKARVASLQSAYQKPDKRVDILLGPLGFLLKQFHAVIFPNGKPPGSNQPNPQWFWTALQRNQLPARLLSREDIETIAFIKRFSLDYGAINFINLAPNNVSELAMYYMANQILRYCDHSTYFINTLTAVIAGSRRPPSVQAAAAWAPQGGAGLEAGARALMDSLDAHPGAWTSMFASCNLLRPVMAARPMVVLGLSISKYYGMAGNDRVFQAGNWASLLGGKNACPLLIFDRTRKFVLACPRAGFVCAASSLGGGAHEHSLCEQLRGIIAEGGAAVASSVFVATVKSLGPRTQQLQIEDWLALLEDEYLSEEMMEFTTRALERGHGEWSTDAALEVAHEAEALVSQLGAAGEVFNFGDFGDEDDHAASFGGLAAAAGAAGVARKRAFHGDDPFGEGPPEKKDLTLDML</sequence>